<protein>
    <recommendedName>
        <fullName>tRNA-2-methylthio-N(6)-dimethylallyladenosine synthase</fullName>
        <ecNumber>2.8.4.3</ecNumber>
    </recommendedName>
    <alternativeName>
        <fullName>(Dimethylallyl)adenosine tRNA methylthiotransferase MiaB</fullName>
    </alternativeName>
    <alternativeName>
        <fullName>tRNA-i(6)A37 methylthiotransferase</fullName>
    </alternativeName>
</protein>
<sequence length="715" mass="77192">MTCGFSRADRSPYHGPVTSTVARDVSGVRTYQVRTYGCQMNVHDSERLAGLLEAAGYRRAAEGAEVADVVVFNTCAVRENADNKLYGNLSHLAPRKRSNPQMQIAVGGCLAQKDREAVLRRAPWVDVVFGTHNIGSLPTLLERARHNKAAQVEIAEALQQFPSSLPSARESAYAAWVSISVGCNNSCTFCIVPSLRGKEVDRSPDDILAEVRSLVADGVLEVTLLGQNVNAYGVSFADPALPRDRGAFARLLRACGEIDGLERVRFTSPHPAEFTDDVIEAMAQTPNVCPALHMPLQSGSDRVLRAMRRSYRAERYLGIIDRVRAAMPHAAITTDLIVGFPGETEEDFAATLDVVRRARFAAAFTFQYSKRPGTPAAELDGQIPKAVVQERYERLVELQESISLQGNQALVGQTVELLVATGEGRKDSATARMSGRARDGRLVHFAADDRVRPGDLVTTVITGAAPHHLIADAGILSHRRTRAGDAHAPAGARAASVSACPPSGRRRPGPTRWMCLMNDDRNHDDPRLGALRTEIEAAERRVAGGIDPGARGFVVSILVFVLLGSFILPHTGDVRGWDVLFGTHDAGAAAVALPSRVFGWLALVFGVGFSTLALVTRRWALAWIALAGTAIAGAAGMLAIWSRQTVPAGHPGPGWGLIVAWITVLVLIYQWARVVWSRTIVQLAAEEQRRRVAAQQQSTTLLDDLPKPEDPAAGT</sequence>
<comment type="function">
    <text evidence="1">Catalyzes the methylthiolation of N6-(dimethylallyl)adenosine (i(6)A), leading to the formation of 2-methylthio-N6-(dimethylallyl)adenosine (ms(2)i(6)A) at position 37 in tRNAs that read codons beginning with uridine.</text>
</comment>
<comment type="catalytic activity">
    <reaction>
        <text>N(6)-dimethylallyladenosine(37) in tRNA + (sulfur carrier)-SH + AH2 + 2 S-adenosyl-L-methionine = 2-methylsulfanyl-N(6)-dimethylallyladenosine(37) in tRNA + (sulfur carrier)-H + 5'-deoxyadenosine + L-methionine + A + S-adenosyl-L-homocysteine + 2 H(+)</text>
        <dbReference type="Rhea" id="RHEA:37067"/>
        <dbReference type="Rhea" id="RHEA-COMP:10375"/>
        <dbReference type="Rhea" id="RHEA-COMP:10376"/>
        <dbReference type="Rhea" id="RHEA-COMP:14737"/>
        <dbReference type="Rhea" id="RHEA-COMP:14739"/>
        <dbReference type="ChEBI" id="CHEBI:13193"/>
        <dbReference type="ChEBI" id="CHEBI:15378"/>
        <dbReference type="ChEBI" id="CHEBI:17319"/>
        <dbReference type="ChEBI" id="CHEBI:17499"/>
        <dbReference type="ChEBI" id="CHEBI:29917"/>
        <dbReference type="ChEBI" id="CHEBI:57844"/>
        <dbReference type="ChEBI" id="CHEBI:57856"/>
        <dbReference type="ChEBI" id="CHEBI:59789"/>
        <dbReference type="ChEBI" id="CHEBI:64428"/>
        <dbReference type="ChEBI" id="CHEBI:74415"/>
        <dbReference type="ChEBI" id="CHEBI:74417"/>
        <dbReference type="EC" id="2.8.4.3"/>
    </reaction>
</comment>
<comment type="cofactor">
    <cofactor evidence="1">
        <name>[4Fe-4S] cluster</name>
        <dbReference type="ChEBI" id="CHEBI:49883"/>
    </cofactor>
    <text evidence="1">Binds 2 [4Fe-4S] clusters. One cluster is coordinated with 3 cysteines and an exchangeable S-adenosyl-L-methionine.</text>
</comment>
<comment type="subunit">
    <text evidence="1">Monomer.</text>
</comment>
<comment type="subcellular location">
    <subcellularLocation>
        <location evidence="4">Cell membrane</location>
        <topology evidence="4">Multi-pass membrane protein</topology>
    </subcellularLocation>
</comment>
<comment type="similarity">
    <text evidence="4">In the N-terminal section; belongs to the methylthiotransferase family. MiaB subfamily.</text>
</comment>
<comment type="sequence caution" evidence="4">
    <conflict type="erroneous initiation">
        <sequence resource="EMBL-CDS" id="ABK67615"/>
    </conflict>
</comment>
<proteinExistence type="inferred from homology"/>
<dbReference type="EC" id="2.8.4.3"/>
<dbReference type="EMBL" id="CP000479">
    <property type="protein sequence ID" value="ABK67615.1"/>
    <property type="status" value="ALT_INIT"/>
    <property type="molecule type" value="Genomic_DNA"/>
</dbReference>
<dbReference type="SMR" id="A0QIR4"/>
<dbReference type="KEGG" id="mav:MAV_3625"/>
<dbReference type="HOGENOM" id="CLU_399980_0_0_11"/>
<dbReference type="Proteomes" id="UP000001574">
    <property type="component" value="Chromosome"/>
</dbReference>
<dbReference type="GO" id="GO:0005829">
    <property type="term" value="C:cytosol"/>
    <property type="evidence" value="ECO:0007669"/>
    <property type="project" value="TreeGrafter"/>
</dbReference>
<dbReference type="GO" id="GO:0005886">
    <property type="term" value="C:plasma membrane"/>
    <property type="evidence" value="ECO:0007669"/>
    <property type="project" value="UniProtKB-SubCell"/>
</dbReference>
<dbReference type="GO" id="GO:0051539">
    <property type="term" value="F:4 iron, 4 sulfur cluster binding"/>
    <property type="evidence" value="ECO:0007669"/>
    <property type="project" value="UniProtKB-UniRule"/>
</dbReference>
<dbReference type="GO" id="GO:0046872">
    <property type="term" value="F:metal ion binding"/>
    <property type="evidence" value="ECO:0007669"/>
    <property type="project" value="UniProtKB-KW"/>
</dbReference>
<dbReference type="GO" id="GO:0035597">
    <property type="term" value="F:N6-isopentenyladenosine methylthiotransferase activity"/>
    <property type="evidence" value="ECO:0007669"/>
    <property type="project" value="TreeGrafter"/>
</dbReference>
<dbReference type="CDD" id="cd01335">
    <property type="entry name" value="Radical_SAM"/>
    <property type="match status" value="1"/>
</dbReference>
<dbReference type="FunFam" id="3.40.50.12160:FF:000003">
    <property type="entry name" value="CDK5 regulatory subunit-associated protein 1"/>
    <property type="match status" value="1"/>
</dbReference>
<dbReference type="FunFam" id="3.80.30.20:FF:000001">
    <property type="entry name" value="tRNA-2-methylthio-N(6)-dimethylallyladenosine synthase 2"/>
    <property type="match status" value="1"/>
</dbReference>
<dbReference type="Gene3D" id="3.40.50.12160">
    <property type="entry name" value="Methylthiotransferase, N-terminal domain"/>
    <property type="match status" value="1"/>
</dbReference>
<dbReference type="Gene3D" id="3.80.30.20">
    <property type="entry name" value="tm_1862 like domain"/>
    <property type="match status" value="1"/>
</dbReference>
<dbReference type="HAMAP" id="MF_01864">
    <property type="entry name" value="tRNA_metthiotr_MiaB"/>
    <property type="match status" value="1"/>
</dbReference>
<dbReference type="InterPro" id="IPR006638">
    <property type="entry name" value="Elp3/MiaA/NifB-like_rSAM"/>
</dbReference>
<dbReference type="InterPro" id="IPR005839">
    <property type="entry name" value="Methylthiotransferase"/>
</dbReference>
<dbReference type="InterPro" id="IPR020612">
    <property type="entry name" value="Methylthiotransferase_CS"/>
</dbReference>
<dbReference type="InterPro" id="IPR013848">
    <property type="entry name" value="Methylthiotransferase_N"/>
</dbReference>
<dbReference type="InterPro" id="IPR038135">
    <property type="entry name" value="Methylthiotransferase_N_sf"/>
</dbReference>
<dbReference type="InterPro" id="IPR006463">
    <property type="entry name" value="MiaB_methiolase"/>
</dbReference>
<dbReference type="InterPro" id="IPR007197">
    <property type="entry name" value="rSAM"/>
</dbReference>
<dbReference type="InterPro" id="IPR023404">
    <property type="entry name" value="rSAM_horseshoe"/>
</dbReference>
<dbReference type="InterPro" id="IPR002792">
    <property type="entry name" value="TRAM_dom"/>
</dbReference>
<dbReference type="NCBIfam" id="TIGR01574">
    <property type="entry name" value="miaB-methiolase"/>
    <property type="match status" value="1"/>
</dbReference>
<dbReference type="NCBIfam" id="TIGR00089">
    <property type="entry name" value="MiaB/RimO family radical SAM methylthiotransferase"/>
    <property type="match status" value="1"/>
</dbReference>
<dbReference type="PANTHER" id="PTHR43020">
    <property type="entry name" value="CDK5 REGULATORY SUBUNIT-ASSOCIATED PROTEIN 1"/>
    <property type="match status" value="1"/>
</dbReference>
<dbReference type="PANTHER" id="PTHR43020:SF2">
    <property type="entry name" value="MITOCHONDRIAL TRNA METHYLTHIOTRANSFERASE CDK5RAP1"/>
    <property type="match status" value="1"/>
</dbReference>
<dbReference type="Pfam" id="PF04055">
    <property type="entry name" value="Radical_SAM"/>
    <property type="match status" value="1"/>
</dbReference>
<dbReference type="Pfam" id="PF00919">
    <property type="entry name" value="UPF0004"/>
    <property type="match status" value="1"/>
</dbReference>
<dbReference type="SFLD" id="SFLDF00273">
    <property type="entry name" value="(dimethylallyl)adenosine_tRNA"/>
    <property type="match status" value="1"/>
</dbReference>
<dbReference type="SFLD" id="SFLDG01082">
    <property type="entry name" value="B12-binding_domain_containing"/>
    <property type="match status" value="1"/>
</dbReference>
<dbReference type="SFLD" id="SFLDS00029">
    <property type="entry name" value="Radical_SAM"/>
    <property type="match status" value="1"/>
</dbReference>
<dbReference type="SMART" id="SM00729">
    <property type="entry name" value="Elp3"/>
    <property type="match status" value="1"/>
</dbReference>
<dbReference type="SUPFAM" id="SSF102114">
    <property type="entry name" value="Radical SAM enzymes"/>
    <property type="match status" value="1"/>
</dbReference>
<dbReference type="PROSITE" id="PS51449">
    <property type="entry name" value="MTTASE_N"/>
    <property type="match status" value="1"/>
</dbReference>
<dbReference type="PROSITE" id="PS01278">
    <property type="entry name" value="MTTASE_RADICAL"/>
    <property type="match status" value="1"/>
</dbReference>
<dbReference type="PROSITE" id="PS51918">
    <property type="entry name" value="RADICAL_SAM"/>
    <property type="match status" value="1"/>
</dbReference>
<dbReference type="PROSITE" id="PS50926">
    <property type="entry name" value="TRAM"/>
    <property type="match status" value="1"/>
</dbReference>
<keyword id="KW-0004">4Fe-4S</keyword>
<keyword id="KW-1003">Cell membrane</keyword>
<keyword id="KW-0408">Iron</keyword>
<keyword id="KW-0411">Iron-sulfur</keyword>
<keyword id="KW-0472">Membrane</keyword>
<keyword id="KW-0479">Metal-binding</keyword>
<keyword id="KW-0949">S-adenosyl-L-methionine</keyword>
<keyword id="KW-0808">Transferase</keyword>
<keyword id="KW-0812">Transmembrane</keyword>
<keyword id="KW-1133">Transmembrane helix</keyword>
<keyword id="KW-0819">tRNA processing</keyword>
<accession>A0QIR4</accession>
<feature type="chain" id="PRO_0000374665" description="tRNA-2-methylthio-N(6)-dimethylallyladenosine synthase">
    <location>
        <begin position="1"/>
        <end position="715"/>
    </location>
</feature>
<feature type="transmembrane region" description="Helical" evidence="2">
    <location>
        <begin position="552"/>
        <end position="572"/>
    </location>
</feature>
<feature type="transmembrane region" description="Helical" evidence="2">
    <location>
        <begin position="589"/>
        <end position="609"/>
    </location>
</feature>
<feature type="transmembrane region" description="Helical" evidence="2">
    <location>
        <begin position="621"/>
        <end position="641"/>
    </location>
</feature>
<feature type="transmembrane region" description="Helical" evidence="2">
    <location>
        <begin position="652"/>
        <end position="672"/>
    </location>
</feature>
<feature type="domain" description="MTTase N-terminal">
    <location>
        <begin position="29"/>
        <end position="146"/>
    </location>
</feature>
<feature type="domain" description="Radical SAM core" evidence="3">
    <location>
        <begin position="169"/>
        <end position="405"/>
    </location>
</feature>
<feature type="domain" description="TRAM">
    <location>
        <begin position="408"/>
        <end position="475"/>
    </location>
</feature>
<feature type="region of interest" description="(Dimethylallyl)adenosine tRNA methylthiotransferase MiaB">
    <location>
        <begin position="1"/>
        <end position="516"/>
    </location>
</feature>
<feature type="region of interest" description="Unknown">
    <location>
        <begin position="517"/>
        <end position="715"/>
    </location>
</feature>
<feature type="binding site" evidence="1">
    <location>
        <position position="38"/>
    </location>
    <ligand>
        <name>[4Fe-4S] cluster</name>
        <dbReference type="ChEBI" id="CHEBI:49883"/>
        <label>1</label>
    </ligand>
</feature>
<feature type="binding site" evidence="1">
    <location>
        <position position="75"/>
    </location>
    <ligand>
        <name>[4Fe-4S] cluster</name>
        <dbReference type="ChEBI" id="CHEBI:49883"/>
        <label>1</label>
    </ligand>
</feature>
<feature type="binding site" evidence="1">
    <location>
        <position position="109"/>
    </location>
    <ligand>
        <name>[4Fe-4S] cluster</name>
        <dbReference type="ChEBI" id="CHEBI:49883"/>
        <label>1</label>
    </ligand>
</feature>
<feature type="binding site" evidence="1">
    <location>
        <position position="183"/>
    </location>
    <ligand>
        <name>[4Fe-4S] cluster</name>
        <dbReference type="ChEBI" id="CHEBI:49883"/>
        <label>2</label>
        <note>4Fe-4S-S-AdoMet</note>
    </ligand>
</feature>
<feature type="binding site" evidence="1">
    <location>
        <position position="187"/>
    </location>
    <ligand>
        <name>[4Fe-4S] cluster</name>
        <dbReference type="ChEBI" id="CHEBI:49883"/>
        <label>2</label>
        <note>4Fe-4S-S-AdoMet</note>
    </ligand>
</feature>
<feature type="binding site" evidence="1">
    <location>
        <position position="190"/>
    </location>
    <ligand>
        <name>[4Fe-4S] cluster</name>
        <dbReference type="ChEBI" id="CHEBI:49883"/>
        <label>2</label>
        <note>4Fe-4S-S-AdoMet</note>
    </ligand>
</feature>
<evidence type="ECO:0000250" key="1"/>
<evidence type="ECO:0000255" key="2"/>
<evidence type="ECO:0000255" key="3">
    <source>
        <dbReference type="PROSITE-ProRule" id="PRU01266"/>
    </source>
</evidence>
<evidence type="ECO:0000305" key="4"/>
<reference key="1">
    <citation type="submission" date="2006-10" db="EMBL/GenBank/DDBJ databases">
        <authorList>
            <person name="Fleischmann R.D."/>
            <person name="Dodson R.J."/>
            <person name="Haft D.H."/>
            <person name="Merkel J.S."/>
            <person name="Nelson W.C."/>
            <person name="Fraser C.M."/>
        </authorList>
    </citation>
    <scope>NUCLEOTIDE SEQUENCE [LARGE SCALE GENOMIC DNA]</scope>
    <source>
        <strain>104</strain>
    </source>
</reference>
<gene>
    <name type="primary">miaB</name>
    <name type="ordered locus">MAV_3625</name>
</gene>
<organism>
    <name type="scientific">Mycobacterium avium (strain 104)</name>
    <dbReference type="NCBI Taxonomy" id="243243"/>
    <lineage>
        <taxon>Bacteria</taxon>
        <taxon>Bacillati</taxon>
        <taxon>Actinomycetota</taxon>
        <taxon>Actinomycetes</taxon>
        <taxon>Mycobacteriales</taxon>
        <taxon>Mycobacteriaceae</taxon>
        <taxon>Mycobacterium</taxon>
        <taxon>Mycobacterium avium complex (MAC)</taxon>
    </lineage>
</organism>
<name>MIAB_MYCA1</name>